<name>Y433_STAEQ</name>
<comment type="function">
    <text evidence="1">Displays ATPase and GTPase activities.</text>
</comment>
<comment type="similarity">
    <text evidence="1">Belongs to the RapZ-like family.</text>
</comment>
<comment type="sequence caution" evidence="2">
    <conflict type="erroneous initiation">
        <sequence resource="EMBL-CDS" id="AAW53855"/>
    </conflict>
</comment>
<evidence type="ECO:0000255" key="1">
    <source>
        <dbReference type="HAMAP-Rule" id="MF_00636"/>
    </source>
</evidence>
<evidence type="ECO:0000305" key="2"/>
<accession>Q5HQW3</accession>
<feature type="chain" id="PRO_0000107764" description="Nucleotide-binding protein SERP0433">
    <location>
        <begin position="1"/>
        <end position="302"/>
    </location>
</feature>
<feature type="binding site" evidence="1">
    <location>
        <begin position="18"/>
        <end position="25"/>
    </location>
    <ligand>
        <name>ATP</name>
        <dbReference type="ChEBI" id="CHEBI:30616"/>
    </ligand>
</feature>
<feature type="binding site" evidence="1">
    <location>
        <begin position="69"/>
        <end position="72"/>
    </location>
    <ligand>
        <name>GTP</name>
        <dbReference type="ChEBI" id="CHEBI:37565"/>
    </ligand>
</feature>
<gene>
    <name type="ordered locus">SERP0433</name>
</gene>
<organism>
    <name type="scientific">Staphylococcus epidermidis (strain ATCC 35984 / DSM 28319 / BCRC 17069 / CCUG 31568 / BM 3577 / RP62A)</name>
    <dbReference type="NCBI Taxonomy" id="176279"/>
    <lineage>
        <taxon>Bacteria</taxon>
        <taxon>Bacillati</taxon>
        <taxon>Bacillota</taxon>
        <taxon>Bacilli</taxon>
        <taxon>Bacillales</taxon>
        <taxon>Staphylococcaceae</taxon>
        <taxon>Staphylococcus</taxon>
    </lineage>
</organism>
<reference key="1">
    <citation type="journal article" date="2005" name="J. Bacteriol.">
        <title>Insights on evolution of virulence and resistance from the complete genome analysis of an early methicillin-resistant Staphylococcus aureus strain and a biofilm-producing methicillin-resistant Staphylococcus epidermidis strain.</title>
        <authorList>
            <person name="Gill S.R."/>
            <person name="Fouts D.E."/>
            <person name="Archer G.L."/>
            <person name="Mongodin E.F."/>
            <person name="DeBoy R.T."/>
            <person name="Ravel J."/>
            <person name="Paulsen I.T."/>
            <person name="Kolonay J.F."/>
            <person name="Brinkac L.M."/>
            <person name="Beanan M.J."/>
            <person name="Dodson R.J."/>
            <person name="Daugherty S.C."/>
            <person name="Madupu R."/>
            <person name="Angiuoli S.V."/>
            <person name="Durkin A.S."/>
            <person name="Haft D.H."/>
            <person name="Vamathevan J.J."/>
            <person name="Khouri H."/>
            <person name="Utterback T.R."/>
            <person name="Lee C."/>
            <person name="Dimitrov G."/>
            <person name="Jiang L."/>
            <person name="Qin H."/>
            <person name="Weidman J."/>
            <person name="Tran K."/>
            <person name="Kang K.H."/>
            <person name="Hance I.R."/>
            <person name="Nelson K.E."/>
            <person name="Fraser C.M."/>
        </authorList>
    </citation>
    <scope>NUCLEOTIDE SEQUENCE [LARGE SCALE GENOMIC DNA]</scope>
    <source>
        <strain>ATCC 35984 / DSM 28319 / BCRC 17069 / CCUG 31568 / BM 3577 / RP62A</strain>
    </source>
</reference>
<sequence length="302" mass="34763">MTSNEKEMGKSELLVVTGMSGAGKSLVIQSLEDMGFFCVDNLPPVLLPKFVELMAQGNPSLQKVAIAIDLRGKELFKSLVKEIDIIKSRNDVILDVMFLEAKTEKIISRYKESRRAHPLNEQGQRSLIDAINEEREHLSEIRSIANYVIDTTKLKPKELKQRISKFYLDENFETFTINVTSFGFKHGIQMDADLVFDVRFLPNPYYVEELRPFIGLDEPVYNYVMKWKETQIFFDKLTDLLKFMIPGYKKEGKSQLVIAIGCTGGQHRSVALAKRLAEYLNEIFEYNVYVHHRDAHIESGER</sequence>
<protein>
    <recommendedName>
        <fullName evidence="1">Nucleotide-binding protein SERP0433</fullName>
    </recommendedName>
</protein>
<dbReference type="EMBL" id="CP000029">
    <property type="protein sequence ID" value="AAW53855.1"/>
    <property type="status" value="ALT_INIT"/>
    <property type="molecule type" value="Genomic_DNA"/>
</dbReference>
<dbReference type="RefSeq" id="WP_044555174.1">
    <property type="nucleotide sequence ID" value="NC_002976.3"/>
</dbReference>
<dbReference type="SMR" id="Q5HQW3"/>
<dbReference type="STRING" id="176279.SERP0433"/>
<dbReference type="KEGG" id="ser:SERP0433"/>
<dbReference type="eggNOG" id="COG1660">
    <property type="taxonomic scope" value="Bacteria"/>
</dbReference>
<dbReference type="HOGENOM" id="CLU_059558_0_0_9"/>
<dbReference type="Proteomes" id="UP000000531">
    <property type="component" value="Chromosome"/>
</dbReference>
<dbReference type="GO" id="GO:0005524">
    <property type="term" value="F:ATP binding"/>
    <property type="evidence" value="ECO:0007669"/>
    <property type="project" value="UniProtKB-UniRule"/>
</dbReference>
<dbReference type="GO" id="GO:0005525">
    <property type="term" value="F:GTP binding"/>
    <property type="evidence" value="ECO:0007669"/>
    <property type="project" value="UniProtKB-UniRule"/>
</dbReference>
<dbReference type="Gene3D" id="3.40.50.300">
    <property type="entry name" value="P-loop containing nucleotide triphosphate hydrolases"/>
    <property type="match status" value="1"/>
</dbReference>
<dbReference type="HAMAP" id="MF_00636">
    <property type="entry name" value="RapZ_like"/>
    <property type="match status" value="1"/>
</dbReference>
<dbReference type="InterPro" id="IPR027417">
    <property type="entry name" value="P-loop_NTPase"/>
</dbReference>
<dbReference type="InterPro" id="IPR005337">
    <property type="entry name" value="RapZ-like"/>
</dbReference>
<dbReference type="InterPro" id="IPR053930">
    <property type="entry name" value="RapZ-like_N"/>
</dbReference>
<dbReference type="InterPro" id="IPR053931">
    <property type="entry name" value="RapZ_C"/>
</dbReference>
<dbReference type="NCBIfam" id="NF003828">
    <property type="entry name" value="PRK05416.1"/>
    <property type="match status" value="1"/>
</dbReference>
<dbReference type="PANTHER" id="PTHR30448">
    <property type="entry name" value="RNASE ADAPTER PROTEIN RAPZ"/>
    <property type="match status" value="1"/>
</dbReference>
<dbReference type="PANTHER" id="PTHR30448:SF0">
    <property type="entry name" value="RNASE ADAPTER PROTEIN RAPZ"/>
    <property type="match status" value="1"/>
</dbReference>
<dbReference type="Pfam" id="PF22740">
    <property type="entry name" value="PapZ_C"/>
    <property type="match status" value="1"/>
</dbReference>
<dbReference type="Pfam" id="PF03668">
    <property type="entry name" value="RapZ-like_N"/>
    <property type="match status" value="1"/>
</dbReference>
<dbReference type="PIRSF" id="PIRSF005052">
    <property type="entry name" value="P-loopkin"/>
    <property type="match status" value="1"/>
</dbReference>
<dbReference type="SUPFAM" id="SSF52540">
    <property type="entry name" value="P-loop containing nucleoside triphosphate hydrolases"/>
    <property type="match status" value="1"/>
</dbReference>
<keyword id="KW-0067">ATP-binding</keyword>
<keyword id="KW-0342">GTP-binding</keyword>
<keyword id="KW-0547">Nucleotide-binding</keyword>
<keyword id="KW-1185">Reference proteome</keyword>
<proteinExistence type="inferred from homology"/>